<reference key="1">
    <citation type="journal article" date="2004" name="Proc. Natl. Acad. Sci. U.S.A.">
        <title>The diploid genome sequence of Candida albicans.</title>
        <authorList>
            <person name="Jones T."/>
            <person name="Federspiel N.A."/>
            <person name="Chibana H."/>
            <person name="Dungan J."/>
            <person name="Kalman S."/>
            <person name="Magee B.B."/>
            <person name="Newport G."/>
            <person name="Thorstenson Y.R."/>
            <person name="Agabian N."/>
            <person name="Magee P.T."/>
            <person name="Davis R.W."/>
            <person name="Scherer S."/>
        </authorList>
    </citation>
    <scope>NUCLEOTIDE SEQUENCE [LARGE SCALE GENOMIC DNA]</scope>
    <source>
        <strain>SC5314 / ATCC MYA-2876</strain>
    </source>
</reference>
<reference key="2">
    <citation type="journal article" date="2007" name="Genome Biol.">
        <title>Assembly of the Candida albicans genome into sixteen supercontigs aligned on the eight chromosomes.</title>
        <authorList>
            <person name="van het Hoog M."/>
            <person name="Rast T.J."/>
            <person name="Martchenko M."/>
            <person name="Grindle S."/>
            <person name="Dignard D."/>
            <person name="Hogues H."/>
            <person name="Cuomo C."/>
            <person name="Berriman M."/>
            <person name="Scherer S."/>
            <person name="Magee B.B."/>
            <person name="Whiteway M."/>
            <person name="Chibana H."/>
            <person name="Nantel A."/>
            <person name="Magee P.T."/>
        </authorList>
    </citation>
    <scope>GENOME REANNOTATION</scope>
    <source>
        <strain>SC5314 / ATCC MYA-2876</strain>
    </source>
</reference>
<reference key="3">
    <citation type="journal article" date="2013" name="Genome Biol.">
        <title>Assembly of a phased diploid Candida albicans genome facilitates allele-specific measurements and provides a simple model for repeat and indel structure.</title>
        <authorList>
            <person name="Muzzey D."/>
            <person name="Schwartz K."/>
            <person name="Weissman J.S."/>
            <person name="Sherlock G."/>
        </authorList>
    </citation>
    <scope>NUCLEOTIDE SEQUENCE [LARGE SCALE GENOMIC DNA]</scope>
    <scope>GENOME REANNOTATION</scope>
    <source>
        <strain>SC5314 / ATCC MYA-2876</strain>
    </source>
</reference>
<accession>Q5ADN9</accession>
<accession>A0A1D8PKN0</accession>
<keyword id="KW-0012">Acyltransferase</keyword>
<keyword id="KW-0449">Lipoprotein</keyword>
<keyword id="KW-0472">Membrane</keyword>
<keyword id="KW-0564">Palmitate</keyword>
<keyword id="KW-1185">Reference proteome</keyword>
<keyword id="KW-0808">Transferase</keyword>
<keyword id="KW-0812">Transmembrane</keyword>
<keyword id="KW-1133">Transmembrane helix</keyword>
<keyword id="KW-0926">Vacuole</keyword>
<proteinExistence type="inferred from homology"/>
<feature type="chain" id="PRO_0000212951" description="Palmitoyltransferase PFA3">
    <location>
        <begin position="1"/>
        <end position="377"/>
    </location>
</feature>
<feature type="topological domain" description="Cytoplasmic" evidence="2">
    <location>
        <begin position="1"/>
        <end position="31"/>
    </location>
</feature>
<feature type="transmembrane region" description="Helical" evidence="2">
    <location>
        <begin position="32"/>
        <end position="52"/>
    </location>
</feature>
<feature type="topological domain" description="Lumenal" evidence="2">
    <location>
        <begin position="53"/>
        <end position="62"/>
    </location>
</feature>
<feature type="transmembrane region" description="Helical" evidence="2">
    <location>
        <begin position="63"/>
        <end position="83"/>
    </location>
</feature>
<feature type="topological domain" description="Cytoplasmic" evidence="2">
    <location>
        <begin position="84"/>
        <end position="181"/>
    </location>
</feature>
<feature type="transmembrane region" description="Helical" evidence="2">
    <location>
        <begin position="182"/>
        <end position="202"/>
    </location>
</feature>
<feature type="topological domain" description="Lumenal" evidence="2">
    <location>
        <begin position="203"/>
        <end position="222"/>
    </location>
</feature>
<feature type="transmembrane region" description="Helical" evidence="2">
    <location>
        <begin position="223"/>
        <end position="243"/>
    </location>
</feature>
<feature type="topological domain" description="Cytoplasmic" evidence="2">
    <location>
        <begin position="244"/>
        <end position="377"/>
    </location>
</feature>
<feature type="domain" description="DHHC" evidence="3">
    <location>
        <begin position="138"/>
        <end position="188"/>
    </location>
</feature>
<feature type="active site" description="S-palmitoyl cysteine intermediate" evidence="3">
    <location>
        <position position="168"/>
    </location>
</feature>
<sequence>MATNNNNNNGNPILRSLETSCCFLATLFPKVFCTLVLTWSLYVLLFIIPNYIKSSLNSTILNIIGITLYVLCIISYYKIILIGPGSPLDYPELRINDLNRMINENPYNNNNNDEEPGDLPPESMIIHTMKVNGNQGYRYCTKCSVWKPDRSHHCSSSGKCILKMDHYCPWFSTCIGFHNYKFFIQFLSYVAIYCWFLFIISGKILYNFITEGLFEDEILSLNLVAVLILSFAFAIAVSVFAMFSIYLCCKNLTTIEFQEKRWNYRGQANDERFNYEFDNNGKRKKINTNIFDLGIMENWKSVMGPNWITWILPITVTVTANTKSMISQDEFNNGVNFKVNEEIYAKYLHNAELQQQLNQQLSSYKDRLRRERQANIV</sequence>
<protein>
    <recommendedName>
        <fullName>Palmitoyltransferase PFA3</fullName>
        <ecNumber>2.3.1.225</ecNumber>
    </recommendedName>
    <alternativeName>
        <fullName>Protein fatty acyltransferase 3</fullName>
    </alternativeName>
</protein>
<comment type="function">
    <text evidence="1">Palmitoyltransferase specific for VAC8. Palmitoylates VAC8 at one or more of its N-terminal cysteine residues, which is required for its proper membrane localization (By similarity).</text>
</comment>
<comment type="catalytic activity">
    <reaction>
        <text>L-cysteinyl-[protein] + hexadecanoyl-CoA = S-hexadecanoyl-L-cysteinyl-[protein] + CoA</text>
        <dbReference type="Rhea" id="RHEA:36683"/>
        <dbReference type="Rhea" id="RHEA-COMP:10131"/>
        <dbReference type="Rhea" id="RHEA-COMP:11032"/>
        <dbReference type="ChEBI" id="CHEBI:29950"/>
        <dbReference type="ChEBI" id="CHEBI:57287"/>
        <dbReference type="ChEBI" id="CHEBI:57379"/>
        <dbReference type="ChEBI" id="CHEBI:74151"/>
        <dbReference type="EC" id="2.3.1.225"/>
    </reaction>
</comment>
<comment type="subcellular location">
    <subcellularLocation>
        <location evidence="1">Vacuole membrane</location>
        <topology evidence="1">Multi-pass membrane protein</topology>
    </subcellularLocation>
</comment>
<comment type="domain">
    <text evidence="1">The DHHC domain is required for palmitoyltransferase activity.</text>
</comment>
<comment type="PTM">
    <text evidence="1">Autopalmitoylated.</text>
</comment>
<comment type="similarity">
    <text evidence="4">Belongs to the DHHC palmitoyltransferase family. PFA3 subfamily.</text>
</comment>
<gene>
    <name type="primary">PFA3</name>
    <name type="ordered locus">CAALFM_C306990WA</name>
    <name type="ORF">CaO19.14094</name>
    <name type="ORF">CaO19.6802</name>
</gene>
<name>PFA3_CANAL</name>
<organism>
    <name type="scientific">Candida albicans (strain SC5314 / ATCC MYA-2876)</name>
    <name type="common">Yeast</name>
    <dbReference type="NCBI Taxonomy" id="237561"/>
    <lineage>
        <taxon>Eukaryota</taxon>
        <taxon>Fungi</taxon>
        <taxon>Dikarya</taxon>
        <taxon>Ascomycota</taxon>
        <taxon>Saccharomycotina</taxon>
        <taxon>Pichiomycetes</taxon>
        <taxon>Debaryomycetaceae</taxon>
        <taxon>Candida/Lodderomyces clade</taxon>
        <taxon>Candida</taxon>
    </lineage>
</organism>
<evidence type="ECO:0000250" key="1"/>
<evidence type="ECO:0000255" key="2"/>
<evidence type="ECO:0000255" key="3">
    <source>
        <dbReference type="PROSITE-ProRule" id="PRU00067"/>
    </source>
</evidence>
<evidence type="ECO:0000305" key="4"/>
<dbReference type="EC" id="2.3.1.225"/>
<dbReference type="EMBL" id="CP017625">
    <property type="protein sequence ID" value="AOW28702.1"/>
    <property type="molecule type" value="Genomic_DNA"/>
</dbReference>
<dbReference type="RefSeq" id="XP_719897.2">
    <property type="nucleotide sequence ID" value="XM_714804.2"/>
</dbReference>
<dbReference type="SMR" id="Q5ADN9"/>
<dbReference type="FunCoup" id="Q5ADN9">
    <property type="interactions" value="463"/>
</dbReference>
<dbReference type="STRING" id="237561.Q5ADN9"/>
<dbReference type="EnsemblFungi" id="C3_06990W_A-T">
    <property type="protein sequence ID" value="C3_06990W_A-T-p1"/>
    <property type="gene ID" value="C3_06990W_A"/>
</dbReference>
<dbReference type="GeneID" id="3638521"/>
<dbReference type="KEGG" id="cal:CAALFM_C306990WA"/>
<dbReference type="CGD" id="CAL0000175769">
    <property type="gene designation" value="orf19.14094"/>
</dbReference>
<dbReference type="VEuPathDB" id="FungiDB:C3_06990W_A"/>
<dbReference type="eggNOG" id="KOG1315">
    <property type="taxonomic scope" value="Eukaryota"/>
</dbReference>
<dbReference type="HOGENOM" id="CLU_027721_0_0_1"/>
<dbReference type="InParanoid" id="Q5ADN9"/>
<dbReference type="OMA" id="YTYFKVI"/>
<dbReference type="OrthoDB" id="302728at2759"/>
<dbReference type="PRO" id="PR:Q5ADN9"/>
<dbReference type="Proteomes" id="UP000000559">
    <property type="component" value="Chromosome 3"/>
</dbReference>
<dbReference type="GO" id="GO:0005783">
    <property type="term" value="C:endoplasmic reticulum"/>
    <property type="evidence" value="ECO:0000318"/>
    <property type="project" value="GO_Central"/>
</dbReference>
<dbReference type="GO" id="GO:0005794">
    <property type="term" value="C:Golgi apparatus"/>
    <property type="evidence" value="ECO:0000318"/>
    <property type="project" value="GO_Central"/>
</dbReference>
<dbReference type="GO" id="GO:0005774">
    <property type="term" value="C:vacuolar membrane"/>
    <property type="evidence" value="ECO:0007669"/>
    <property type="project" value="UniProtKB-SubCell"/>
</dbReference>
<dbReference type="GO" id="GO:0019706">
    <property type="term" value="F:protein-cysteine S-palmitoyltransferase activity"/>
    <property type="evidence" value="ECO:0000318"/>
    <property type="project" value="GO_Central"/>
</dbReference>
<dbReference type="GO" id="GO:0006612">
    <property type="term" value="P:protein targeting to membrane"/>
    <property type="evidence" value="ECO:0000318"/>
    <property type="project" value="GO_Central"/>
</dbReference>
<dbReference type="InterPro" id="IPR001594">
    <property type="entry name" value="Palmitoyltrfase_DHHC"/>
</dbReference>
<dbReference type="InterPro" id="IPR039859">
    <property type="entry name" value="PFA4/ZDH16/20/ERF2-like"/>
</dbReference>
<dbReference type="PANTHER" id="PTHR12246">
    <property type="entry name" value="PALMITOYLTRANSFERASE ZDHHC16"/>
    <property type="match status" value="1"/>
</dbReference>
<dbReference type="Pfam" id="PF01529">
    <property type="entry name" value="DHHC"/>
    <property type="match status" value="1"/>
</dbReference>
<dbReference type="PROSITE" id="PS50216">
    <property type="entry name" value="DHHC"/>
    <property type="match status" value="1"/>
</dbReference>